<gene>
    <name type="primary">oct1</name>
    <name type="ORF">An11g05710</name>
</gene>
<reference key="1">
    <citation type="journal article" date="2007" name="Nat. Biotechnol.">
        <title>Genome sequencing and analysis of the versatile cell factory Aspergillus niger CBS 513.88.</title>
        <authorList>
            <person name="Pel H.J."/>
            <person name="de Winde J.H."/>
            <person name="Archer D.B."/>
            <person name="Dyer P.S."/>
            <person name="Hofmann G."/>
            <person name="Schaap P.J."/>
            <person name="Turner G."/>
            <person name="de Vries R.P."/>
            <person name="Albang R."/>
            <person name="Albermann K."/>
            <person name="Andersen M.R."/>
            <person name="Bendtsen J.D."/>
            <person name="Benen J.A.E."/>
            <person name="van den Berg M."/>
            <person name="Breestraat S."/>
            <person name="Caddick M.X."/>
            <person name="Contreras R."/>
            <person name="Cornell M."/>
            <person name="Coutinho P.M."/>
            <person name="Danchin E.G.J."/>
            <person name="Debets A.J.M."/>
            <person name="Dekker P."/>
            <person name="van Dijck P.W.M."/>
            <person name="van Dijk A."/>
            <person name="Dijkhuizen L."/>
            <person name="Driessen A.J.M."/>
            <person name="d'Enfert C."/>
            <person name="Geysens S."/>
            <person name="Goosen C."/>
            <person name="Groot G.S.P."/>
            <person name="de Groot P.W.J."/>
            <person name="Guillemette T."/>
            <person name="Henrissat B."/>
            <person name="Herweijer M."/>
            <person name="van den Hombergh J.P.T.W."/>
            <person name="van den Hondel C.A.M.J.J."/>
            <person name="van der Heijden R.T.J.M."/>
            <person name="van der Kaaij R.M."/>
            <person name="Klis F.M."/>
            <person name="Kools H.J."/>
            <person name="Kubicek C.P."/>
            <person name="van Kuyk P.A."/>
            <person name="Lauber J."/>
            <person name="Lu X."/>
            <person name="van der Maarel M.J.E.C."/>
            <person name="Meulenberg R."/>
            <person name="Menke H."/>
            <person name="Mortimer M.A."/>
            <person name="Nielsen J."/>
            <person name="Oliver S.G."/>
            <person name="Olsthoorn M."/>
            <person name="Pal K."/>
            <person name="van Peij N.N.M.E."/>
            <person name="Ram A.F.J."/>
            <person name="Rinas U."/>
            <person name="Roubos J.A."/>
            <person name="Sagt C.M.J."/>
            <person name="Schmoll M."/>
            <person name="Sun J."/>
            <person name="Ussery D."/>
            <person name="Varga J."/>
            <person name="Vervecken W."/>
            <person name="van de Vondervoort P.J.J."/>
            <person name="Wedler H."/>
            <person name="Woesten H.A.B."/>
            <person name="Zeng A.-P."/>
            <person name="van Ooyen A.J.J."/>
            <person name="Visser J."/>
            <person name="Stam H."/>
        </authorList>
    </citation>
    <scope>NUCLEOTIDE SEQUENCE [LARGE SCALE GENOMIC DNA]</scope>
    <source>
        <strain>ATCC MYA-4892 / CBS 513.88 / FGSC A1513</strain>
    </source>
</reference>
<name>PMIP_ASPNC</name>
<organism>
    <name type="scientific">Aspergillus niger (strain ATCC MYA-4892 / CBS 513.88 / FGSC A1513)</name>
    <dbReference type="NCBI Taxonomy" id="425011"/>
    <lineage>
        <taxon>Eukaryota</taxon>
        <taxon>Fungi</taxon>
        <taxon>Dikarya</taxon>
        <taxon>Ascomycota</taxon>
        <taxon>Pezizomycotina</taxon>
        <taxon>Eurotiomycetes</taxon>
        <taxon>Eurotiomycetidae</taxon>
        <taxon>Eurotiales</taxon>
        <taxon>Aspergillaceae</taxon>
        <taxon>Aspergillus</taxon>
        <taxon>Aspergillus subgen. Circumdati</taxon>
    </lineage>
</organism>
<dbReference type="EC" id="3.4.24.59"/>
<dbReference type="EMBL" id="AM270239">
    <property type="protein sequence ID" value="CAK40728.1"/>
    <property type="molecule type" value="Genomic_DNA"/>
</dbReference>
<dbReference type="RefSeq" id="XP_001394557.1">
    <property type="nucleotide sequence ID" value="XM_001394520.2"/>
</dbReference>
<dbReference type="SMR" id="A2QWM4"/>
<dbReference type="EnsemblFungi" id="CAK40728">
    <property type="protein sequence ID" value="CAK40728"/>
    <property type="gene ID" value="An11g05710"/>
</dbReference>
<dbReference type="GeneID" id="4984800"/>
<dbReference type="KEGG" id="ang:An11g05710"/>
<dbReference type="VEuPathDB" id="FungiDB:An11g05710"/>
<dbReference type="HOGENOM" id="CLU_001805_0_0_1"/>
<dbReference type="Proteomes" id="UP000006706">
    <property type="component" value="Chromosome 7R"/>
</dbReference>
<dbReference type="GO" id="GO:0005759">
    <property type="term" value="C:mitochondrial matrix"/>
    <property type="evidence" value="ECO:0007669"/>
    <property type="project" value="UniProtKB-SubCell"/>
</dbReference>
<dbReference type="GO" id="GO:0046872">
    <property type="term" value="F:metal ion binding"/>
    <property type="evidence" value="ECO:0007669"/>
    <property type="project" value="UniProtKB-KW"/>
</dbReference>
<dbReference type="GO" id="GO:0004222">
    <property type="term" value="F:metalloendopeptidase activity"/>
    <property type="evidence" value="ECO:0007669"/>
    <property type="project" value="UniProtKB-EC"/>
</dbReference>
<dbReference type="GO" id="GO:0006518">
    <property type="term" value="P:peptide metabolic process"/>
    <property type="evidence" value="ECO:0007669"/>
    <property type="project" value="TreeGrafter"/>
</dbReference>
<dbReference type="GO" id="GO:0006627">
    <property type="term" value="P:protein processing involved in protein targeting to mitochondrion"/>
    <property type="evidence" value="ECO:0007669"/>
    <property type="project" value="TreeGrafter"/>
</dbReference>
<dbReference type="CDD" id="cd06457">
    <property type="entry name" value="M3A_MIP"/>
    <property type="match status" value="1"/>
</dbReference>
<dbReference type="FunFam" id="3.40.390.10:FF:000029">
    <property type="entry name" value="Mitochondrial intermediate peptidase 1"/>
    <property type="match status" value="1"/>
</dbReference>
<dbReference type="Gene3D" id="3.40.390.10">
    <property type="entry name" value="Collagenase (Catalytic Domain)"/>
    <property type="match status" value="1"/>
</dbReference>
<dbReference type="Gene3D" id="1.10.1370.10">
    <property type="entry name" value="Neurolysin, domain 3"/>
    <property type="match status" value="1"/>
</dbReference>
<dbReference type="InterPro" id="IPR033851">
    <property type="entry name" value="M3A_MIP"/>
</dbReference>
<dbReference type="InterPro" id="IPR024079">
    <property type="entry name" value="MetalloPept_cat_dom_sf"/>
</dbReference>
<dbReference type="InterPro" id="IPR024077">
    <property type="entry name" value="Neurolysin/TOP_dom2"/>
</dbReference>
<dbReference type="InterPro" id="IPR045090">
    <property type="entry name" value="Pept_M3A_M3B"/>
</dbReference>
<dbReference type="InterPro" id="IPR001567">
    <property type="entry name" value="Pept_M3A_M3B_dom"/>
</dbReference>
<dbReference type="PANTHER" id="PTHR11804:SF79">
    <property type="entry name" value="MITOCHONDRIAL INTERMEDIATE PEPTIDASE"/>
    <property type="match status" value="1"/>
</dbReference>
<dbReference type="PANTHER" id="PTHR11804">
    <property type="entry name" value="PROTEASE M3 THIMET OLIGOPEPTIDASE-RELATED"/>
    <property type="match status" value="1"/>
</dbReference>
<dbReference type="Pfam" id="PF01432">
    <property type="entry name" value="Peptidase_M3"/>
    <property type="match status" value="1"/>
</dbReference>
<dbReference type="SUPFAM" id="SSF55486">
    <property type="entry name" value="Metalloproteases ('zincins'), catalytic domain"/>
    <property type="match status" value="1"/>
</dbReference>
<dbReference type="PROSITE" id="PS00039">
    <property type="entry name" value="DEAD_ATP_HELICASE"/>
    <property type="match status" value="1"/>
</dbReference>
<dbReference type="PROSITE" id="PS00142">
    <property type="entry name" value="ZINC_PROTEASE"/>
    <property type="match status" value="1"/>
</dbReference>
<feature type="transit peptide" description="Mitochondrion" evidence="2">
    <location>
        <begin position="1"/>
        <end status="unknown"/>
    </location>
</feature>
<feature type="chain" id="PRO_0000338572" description="Mitochondrial intermediate peptidase">
    <location>
        <begin status="unknown"/>
        <end position="799"/>
    </location>
</feature>
<feature type="active site" evidence="3">
    <location>
        <position position="563"/>
    </location>
</feature>
<feature type="binding site" evidence="3">
    <location>
        <position position="562"/>
    </location>
    <ligand>
        <name>Zn(2+)</name>
        <dbReference type="ChEBI" id="CHEBI:29105"/>
        <note>catalytic</note>
    </ligand>
</feature>
<feature type="binding site" evidence="3">
    <location>
        <position position="566"/>
    </location>
    <ligand>
        <name>Zn(2+)</name>
        <dbReference type="ChEBI" id="CHEBI:29105"/>
        <note>catalytic</note>
    </ligand>
</feature>
<feature type="binding site" evidence="3">
    <location>
        <position position="569"/>
    </location>
    <ligand>
        <name>Zn(2+)</name>
        <dbReference type="ChEBI" id="CHEBI:29105"/>
        <note>catalytic</note>
    </ligand>
</feature>
<sequence>MGASLLLPLRRRPWTCRTCLLQARRSLETAASPATHRAAFDYLPSKNDAQKKSDDDTLRRVFDSQPFWREFSQRSAAHLKPTGLVQNQYLTSPDGFRVFATTTLQKCQAIVAKVLAGTTLEDYQSMARDLDRLSDLLCRVIDLSDFIRVIHPDPRVQEAATQAYALMFEYMNVLNTTTGLNDQLKKAAANPEVTARWSDEEKIVAQILIKDFSNSAIHMPPHARQRFVNLSNDISQLGNTFVNAAEPAKSHVTVSANSLRGLDPILVQQIKRWNRTASVPSMGLIPRLALRSVHDEGVRREVYLATRTSSARQIQRLEQLLAKRAELAQLSGYDSFAHMTLSDKMAKSPEAVSNFLTSLVGSNRPYVQEELAQLQSMKGSAGRLQPWDHAYYVHQRVLQYSQSRRSRELSAVPEFFSLGTVMQGLSRLFDRLYGVRLVPQETAAGETWNSDVRRLDVVDEADRHIAVIYCDLFSRPNKHPNPAHYTLRCAREISAEEVAECATTMDASAHPNDGMATAVDRDAKTLRQLPTIALVCDFPEPPATGTGRPSLLSEHSVRTLFHEMGHALHSILGQTRLQSISGTRCATDFAELPSVLMERFATAPEVLALYARHWETDAPLSESMMQHMEKDRTAHGSIYGAMENESQILMALVDQAYHSLPAGQATSIDSTAVFHQVSAEHCTLPDPTDTKPPTSWQGFFGHLHGYGATYYSYIFDRAIANKLWEDVFQQGKAAVDRQAGERYKNEVLRWGGGRNGWNCVAGVLGSAHPANADGRLVEGGDEAMREVGRWGLGRDGVSE</sequence>
<comment type="function">
    <text evidence="1">Cleaves proteins, imported into the mitochondrion, to their mature size. While most mitochondrial precursor proteins are processed to the mature form in one step by mitochondrial processing peptidase (MPP), the sequential cleavage by MIP of an octapeptide after initial processing by MPP is a required step for a subgroup of nuclear-encoded precursor proteins destined for the matrix or the inner membrane (By similarity).</text>
</comment>
<comment type="catalytic activity">
    <reaction>
        <text>Release of an N-terminal octapeptide as second stage of processing of some proteins imported into the mitochondrion.</text>
        <dbReference type="EC" id="3.4.24.59"/>
    </reaction>
</comment>
<comment type="cofactor">
    <cofactor evidence="1">
        <name>Zn(2+)</name>
        <dbReference type="ChEBI" id="CHEBI:29105"/>
    </cofactor>
    <text evidence="1">Binds 1 zinc ion.</text>
</comment>
<comment type="subcellular location">
    <subcellularLocation>
        <location evidence="1">Mitochondrion matrix</location>
    </subcellularLocation>
</comment>
<comment type="similarity">
    <text evidence="4">Belongs to the peptidase M3 family.</text>
</comment>
<proteinExistence type="inferred from homology"/>
<protein>
    <recommendedName>
        <fullName>Mitochondrial intermediate peptidase</fullName>
        <shortName>MIP</shortName>
        <ecNumber>3.4.24.59</ecNumber>
    </recommendedName>
    <alternativeName>
        <fullName>Octapeptidyl aminopeptidase</fullName>
    </alternativeName>
</protein>
<keyword id="KW-0378">Hydrolase</keyword>
<keyword id="KW-0479">Metal-binding</keyword>
<keyword id="KW-0482">Metalloprotease</keyword>
<keyword id="KW-0496">Mitochondrion</keyword>
<keyword id="KW-0645">Protease</keyword>
<keyword id="KW-1185">Reference proteome</keyword>
<keyword id="KW-0809">Transit peptide</keyword>
<keyword id="KW-0862">Zinc</keyword>
<evidence type="ECO:0000250" key="1"/>
<evidence type="ECO:0000255" key="2"/>
<evidence type="ECO:0000255" key="3">
    <source>
        <dbReference type="PROSITE-ProRule" id="PRU10095"/>
    </source>
</evidence>
<evidence type="ECO:0000305" key="4"/>
<accession>A2QWM4</accession>